<sequence>MSDSIVHVTDDSFEDEVLKSLEPVLVDYWADWCGPCKMIAPVLDEIAGEYAGRIKVAKLNIDENPNTPRRYGIRGIPTLMLSRQSEVEATK</sequence>
<keyword id="KW-1015">Disulfide bond</keyword>
<keyword id="KW-0249">Electron transport</keyword>
<keyword id="KW-0676">Redox-active center</keyword>
<keyword id="KW-0813">Transport</keyword>
<name>THIO_THIRO</name>
<dbReference type="EMBL" id="U75512">
    <property type="protein sequence ID" value="AAB36882.1"/>
    <property type="molecule type" value="Genomic_DNA"/>
</dbReference>
<dbReference type="SMR" id="P96132"/>
<dbReference type="STRING" id="1058.SAMN05421783_110106"/>
<dbReference type="GO" id="GO:0005829">
    <property type="term" value="C:cytosol"/>
    <property type="evidence" value="ECO:0007669"/>
    <property type="project" value="TreeGrafter"/>
</dbReference>
<dbReference type="GO" id="GO:0015035">
    <property type="term" value="F:protein-disulfide reductase activity"/>
    <property type="evidence" value="ECO:0007669"/>
    <property type="project" value="InterPro"/>
</dbReference>
<dbReference type="GO" id="GO:0045454">
    <property type="term" value="P:cell redox homeostasis"/>
    <property type="evidence" value="ECO:0007669"/>
    <property type="project" value="TreeGrafter"/>
</dbReference>
<dbReference type="CDD" id="cd02947">
    <property type="entry name" value="TRX_family"/>
    <property type="match status" value="1"/>
</dbReference>
<dbReference type="FunFam" id="3.40.30.10:FF:000001">
    <property type="entry name" value="Thioredoxin"/>
    <property type="match status" value="1"/>
</dbReference>
<dbReference type="Gene3D" id="3.40.30.10">
    <property type="entry name" value="Glutaredoxin"/>
    <property type="match status" value="1"/>
</dbReference>
<dbReference type="InterPro" id="IPR005746">
    <property type="entry name" value="Thioredoxin"/>
</dbReference>
<dbReference type="InterPro" id="IPR036249">
    <property type="entry name" value="Thioredoxin-like_sf"/>
</dbReference>
<dbReference type="InterPro" id="IPR017937">
    <property type="entry name" value="Thioredoxin_CS"/>
</dbReference>
<dbReference type="InterPro" id="IPR013766">
    <property type="entry name" value="Thioredoxin_domain"/>
</dbReference>
<dbReference type="NCBIfam" id="NF006898">
    <property type="entry name" value="PRK09381.1"/>
    <property type="match status" value="1"/>
</dbReference>
<dbReference type="NCBIfam" id="TIGR01068">
    <property type="entry name" value="thioredoxin"/>
    <property type="match status" value="1"/>
</dbReference>
<dbReference type="PANTHER" id="PTHR45663">
    <property type="entry name" value="GEO12009P1"/>
    <property type="match status" value="1"/>
</dbReference>
<dbReference type="PANTHER" id="PTHR45663:SF11">
    <property type="entry name" value="GEO12009P1"/>
    <property type="match status" value="1"/>
</dbReference>
<dbReference type="Pfam" id="PF00085">
    <property type="entry name" value="Thioredoxin"/>
    <property type="match status" value="1"/>
</dbReference>
<dbReference type="PIRSF" id="PIRSF000077">
    <property type="entry name" value="Thioredoxin"/>
    <property type="match status" value="1"/>
</dbReference>
<dbReference type="PRINTS" id="PR00421">
    <property type="entry name" value="THIOREDOXIN"/>
</dbReference>
<dbReference type="SUPFAM" id="SSF52833">
    <property type="entry name" value="Thioredoxin-like"/>
    <property type="match status" value="1"/>
</dbReference>
<dbReference type="PROSITE" id="PS00194">
    <property type="entry name" value="THIOREDOXIN_1"/>
    <property type="match status" value="1"/>
</dbReference>
<dbReference type="PROSITE" id="PS51352">
    <property type="entry name" value="THIOREDOXIN_2"/>
    <property type="match status" value="1"/>
</dbReference>
<feature type="chain" id="PRO_0000120141" description="Thioredoxin">
    <location>
        <begin position="1"/>
        <end position="91" status="greater than"/>
    </location>
</feature>
<feature type="domain" description="Thioredoxin" evidence="2">
    <location>
        <begin position="2"/>
        <end position="91" status="greater than"/>
    </location>
</feature>
<feature type="disulfide bond" description="Redox-active" evidence="2">
    <location>
        <begin position="33"/>
        <end position="36"/>
    </location>
</feature>
<feature type="non-terminal residue">
    <location>
        <position position="91"/>
    </location>
</feature>
<evidence type="ECO:0000250" key="1"/>
<evidence type="ECO:0000255" key="2">
    <source>
        <dbReference type="PROSITE-ProRule" id="PRU00691"/>
    </source>
</evidence>
<evidence type="ECO:0000305" key="3"/>
<gene>
    <name type="primary">trxA</name>
</gene>
<organism>
    <name type="scientific">Thiocapsa roseopersicina</name>
    <dbReference type="NCBI Taxonomy" id="1058"/>
    <lineage>
        <taxon>Bacteria</taxon>
        <taxon>Pseudomonadati</taxon>
        <taxon>Pseudomonadota</taxon>
        <taxon>Gammaproteobacteria</taxon>
        <taxon>Chromatiales</taxon>
        <taxon>Chromatiaceae</taxon>
        <taxon>Thiocapsa</taxon>
    </lineage>
</organism>
<reference key="1">
    <citation type="submission" date="1996-08" db="EMBL/GenBank/DDBJ databases">
        <authorList>
            <person name="Haverkamp T."/>
            <person name="Schwenn J.D."/>
        </authorList>
    </citation>
    <scope>NUCLEOTIDE SEQUENCE [GENOMIC DNA]</scope>
    <source>
        <strain>M1</strain>
    </source>
</reference>
<accession>P96132</accession>
<comment type="function">
    <text evidence="1">Participates in various redox reactions through the reversible oxidation of its active center dithiol to a disulfide and catalyzes dithiol-disulfide exchange reactions.</text>
</comment>
<comment type="similarity">
    <text evidence="3">Belongs to the thioredoxin family.</text>
</comment>
<protein>
    <recommendedName>
        <fullName>Thioredoxin</fullName>
        <shortName>Trx</shortName>
    </recommendedName>
</protein>
<proteinExistence type="inferred from homology"/>